<proteinExistence type="evidence at protein level"/>
<keyword id="KW-0045">Antibiotic biosynthesis</keyword>
<keyword id="KW-0274">FAD</keyword>
<keyword id="KW-0285">Flavoprotein</keyword>
<keyword id="KW-0520">NAD</keyword>
<keyword id="KW-0521">NADP</keyword>
<keyword id="KW-0547">Nucleotide-binding</keyword>
<keyword id="KW-0560">Oxidoreductase</keyword>
<gene>
    <name type="primary">dnrF</name>
</gene>
<reference key="1">
    <citation type="journal article" date="1995" name="Microbiology">
        <title>Streptomyces peucetius daunorubicin biosynthesis gene, dnrF: sequence and heterologous expression.</title>
        <authorList>
            <person name="Filippini S."/>
            <person name="Solinas M.M."/>
            <person name="Breme U."/>
            <person name="Schluter M.B."/>
            <person name="Gabellini D."/>
            <person name="Biamonti G."/>
            <person name="Colombo A.L."/>
            <person name="Garofano L."/>
        </authorList>
    </citation>
    <scope>NUCLEOTIDE SEQUENCE [GENOMIC DNA]</scope>
    <scope>FUNCTION</scope>
    <scope>CATALYTIC ACTIVITY</scope>
    <scope>SUBSTRATE SPECIFICITY</scope>
    <source>
        <strain>ATCC 29050 / DSM 40754 / JCM 9920 / NBRC 100596 / NCIMB 10972</strain>
    </source>
</reference>
<reference key="2">
    <citation type="journal article" date="1991" name="Proc. Natl. Acad. Sci. U.S.A.">
        <title>A bacterial analog of the mdr gene of mammalian tumor cells is present in Streptomyces peucetius, the producer of daunorubicin and doxorubicin.</title>
        <authorList>
            <person name="Guilfoile P.G."/>
            <person name="Hutchinson C.R."/>
        </authorList>
    </citation>
    <scope>NUCLEOTIDE SEQUENCE [GENOMIC DNA] OF 1-79</scope>
    <source>
        <strain>ATCC 29050 / DSM 40754 / JCM 9920 / NBRC 100596 / NCIMB 10972</strain>
    </source>
</reference>
<organism>
    <name type="scientific">Streptomyces peucetius</name>
    <dbReference type="NCBI Taxonomy" id="1950"/>
    <lineage>
        <taxon>Bacteria</taxon>
        <taxon>Bacillati</taxon>
        <taxon>Actinomycetota</taxon>
        <taxon>Actinomycetes</taxon>
        <taxon>Kitasatosporales</taxon>
        <taxon>Streptomycetaceae</taxon>
        <taxon>Streptomyces</taxon>
    </lineage>
</organism>
<feature type="chain" id="PRO_0000425676" description="Aklavinone 12-hydroxylase DnrF">
    <location>
        <begin position="1"/>
        <end position="489"/>
    </location>
</feature>
<feature type="region of interest" description="Disordered" evidence="2">
    <location>
        <begin position="402"/>
        <end position="428"/>
    </location>
</feature>
<feature type="region of interest" description="Disordered" evidence="2">
    <location>
        <begin position="455"/>
        <end position="489"/>
    </location>
</feature>
<feature type="compositionally biased region" description="Low complexity" evidence="2">
    <location>
        <begin position="468"/>
        <end position="482"/>
    </location>
</feature>
<feature type="active site" description="Proton acceptor" evidence="1">
    <location>
        <position position="224"/>
    </location>
</feature>
<feature type="binding site" evidence="1">
    <location>
        <begin position="17"/>
        <end position="18"/>
    </location>
    <ligand>
        <name>FAD</name>
        <dbReference type="ChEBI" id="CHEBI:57692"/>
    </ligand>
</feature>
<feature type="binding site" evidence="1">
    <location>
        <position position="37"/>
    </location>
    <ligand>
        <name>FAD</name>
        <dbReference type="ChEBI" id="CHEBI:57692"/>
    </ligand>
</feature>
<feature type="binding site" evidence="1">
    <location>
        <position position="121"/>
    </location>
    <ligand>
        <name>FAD</name>
        <dbReference type="ChEBI" id="CHEBI:57692"/>
    </ligand>
</feature>
<feature type="binding site" evidence="1">
    <location>
        <position position="145"/>
    </location>
    <ligand>
        <name>FAD</name>
        <dbReference type="ChEBI" id="CHEBI:57692"/>
    </ligand>
</feature>
<feature type="binding site" evidence="1">
    <location>
        <position position="308"/>
    </location>
    <ligand>
        <name>FAD</name>
        <dbReference type="ChEBI" id="CHEBI:57692"/>
    </ligand>
</feature>
<feature type="binding site" evidence="1">
    <location>
        <position position="317"/>
    </location>
    <ligand>
        <name>aklavinone</name>
        <dbReference type="ChEBI" id="CHEBI:31181"/>
    </ligand>
</feature>
<evidence type="ECO:0000250" key="1"/>
<evidence type="ECO:0000256" key="2">
    <source>
        <dbReference type="SAM" id="MobiDB-lite"/>
    </source>
</evidence>
<evidence type="ECO:0000269" key="3">
    <source>
    </source>
</evidence>
<evidence type="ECO:0000305" key="4"/>
<name>DNRF_STRPE</name>
<sequence>MALTKPDVDVLVVGGGLGGLSTALFLARRGARVLLVERHASTSVLPKAAGQNPRTMELFRFGGVADEILATDDIRGAQGDFTIKVVERVGGRVLHSFAESFEELVGATEQCTPMPWALAPQDRVEPVLVAHAAKHGAEIRFATELTSFQAGDDGVTARLRDLGTGAESTVSARYLVAADGPRSAIRESLGITRHGHGTLAHFMGVIFEADLTAVVPPGSTGWYYLQHPDFTGTFGPTDRPNRHTFYVATTPERGERPEDYTPQRCTELIRLAVDAPGLVPDILDIQAWDMAAYIADRWREGPVLLVGDAAKVTPPTGGMGGNTAIGDGFDVAWKLAAVLRGEAGERLLDSYGAERSLVSRLVVDESLAIYAQRMAPHLLGSVPEERGTAQVVLGFRYRSTAVAAEDDDPEPTEDPRRPSGRPGFRAPHVWIEQDGTRRSTVELFGDCWVLLAAPEGGAWPGRPPAPPRIWASASTSISSAAMSPPPPAN</sequence>
<dbReference type="EC" id="1.14.13.180"/>
<dbReference type="EMBL" id="U18082">
    <property type="protein sequence ID" value="AAC43342.1"/>
    <property type="molecule type" value="Genomic_DNA"/>
</dbReference>
<dbReference type="EMBL" id="M73758">
    <property type="protein sequence ID" value="AAA74716.1"/>
    <property type="molecule type" value="Genomic_DNA"/>
</dbReference>
<dbReference type="PIR" id="S27706">
    <property type="entry name" value="S27706"/>
</dbReference>
<dbReference type="SMR" id="P32009"/>
<dbReference type="KEGG" id="ag:AAC43342"/>
<dbReference type="BRENDA" id="1.14.13.180">
    <property type="organism ID" value="6073"/>
</dbReference>
<dbReference type="UniPathway" id="UPA00054"/>
<dbReference type="UniPathway" id="UPA01040"/>
<dbReference type="UniPathway" id="UPA01042"/>
<dbReference type="GO" id="GO:0071949">
    <property type="term" value="F:FAD binding"/>
    <property type="evidence" value="ECO:0007669"/>
    <property type="project" value="InterPro"/>
</dbReference>
<dbReference type="GO" id="GO:0016709">
    <property type="term" value="F:oxidoreductase activity, acting on paired donors, with incorporation or reduction of molecular oxygen, NAD(P)H as one donor, and incorporation of one atom of oxygen"/>
    <property type="evidence" value="ECO:0007669"/>
    <property type="project" value="UniProtKB-ARBA"/>
</dbReference>
<dbReference type="GO" id="GO:0017000">
    <property type="term" value="P:antibiotic biosynthetic process"/>
    <property type="evidence" value="ECO:0007669"/>
    <property type="project" value="UniProtKB-KW"/>
</dbReference>
<dbReference type="Gene3D" id="3.40.30.120">
    <property type="match status" value="1"/>
</dbReference>
<dbReference type="Gene3D" id="3.30.9.10">
    <property type="entry name" value="D-Amino Acid Oxidase, subunit A, domain 2"/>
    <property type="match status" value="1"/>
</dbReference>
<dbReference type="Gene3D" id="3.50.50.60">
    <property type="entry name" value="FAD/NAD(P)-binding domain"/>
    <property type="match status" value="1"/>
</dbReference>
<dbReference type="InterPro" id="IPR002938">
    <property type="entry name" value="FAD-bd"/>
</dbReference>
<dbReference type="InterPro" id="IPR036188">
    <property type="entry name" value="FAD/NAD-bd_sf"/>
</dbReference>
<dbReference type="InterPro" id="IPR050641">
    <property type="entry name" value="RIFMO-like"/>
</dbReference>
<dbReference type="NCBIfam" id="NF046068">
    <property type="entry name" value="AkvoneHdxseDnrF"/>
    <property type="match status" value="1"/>
</dbReference>
<dbReference type="NCBIfam" id="NF046069">
    <property type="entry name" value="AkvoneHdxseRdmE"/>
    <property type="match status" value="1"/>
</dbReference>
<dbReference type="PANTHER" id="PTHR43004:SF19">
    <property type="entry name" value="BINDING MONOOXYGENASE, PUTATIVE (JCVI)-RELATED"/>
    <property type="match status" value="1"/>
</dbReference>
<dbReference type="PANTHER" id="PTHR43004">
    <property type="entry name" value="TRK SYSTEM POTASSIUM UPTAKE PROTEIN"/>
    <property type="match status" value="1"/>
</dbReference>
<dbReference type="Pfam" id="PF01494">
    <property type="entry name" value="FAD_binding_3"/>
    <property type="match status" value="1"/>
</dbReference>
<dbReference type="PRINTS" id="PR00420">
    <property type="entry name" value="RNGMNOXGNASE"/>
</dbReference>
<dbReference type="SUPFAM" id="SSF51905">
    <property type="entry name" value="FAD/NAD(P)-binding domain"/>
    <property type="match status" value="1"/>
</dbReference>
<protein>
    <recommendedName>
        <fullName>Aklavinone 12-hydroxylase DnrF</fullName>
        <ecNumber>1.14.13.180</ecNumber>
    </recommendedName>
    <alternativeName>
        <fullName>Aklavinone 11-hydroxylase</fullName>
    </alternativeName>
</protein>
<accession>P32009</accession>
<accession>P72497</accession>
<comment type="function">
    <text evidence="3">Involved in the biosynthesis of the anthracyclines carminomycin, rhodomycin and daunorubicin (daunomycin) which are aromatic polyketide antibiotics that exhibit high cytotoxicity and are widely applied in the chemotherapy of a variety of cancers. Catalyzes the incorporation of a hydroxyl group at position C-11 of aklavinone, resulting in epsilon-rhodomycinone. It cannot accept substrates glycosylated at position C-7. It can also hydroxylate 11-deoxycarminomycinone and can use both NAD or NADP.</text>
</comment>
<comment type="catalytic activity">
    <reaction evidence="3">
        <text>aklavinone + NADPH + O2 + H(+) = epsilon-rhodomycinone + NADP(+) + H2O</text>
        <dbReference type="Rhea" id="RHEA:37835"/>
        <dbReference type="ChEBI" id="CHEBI:15377"/>
        <dbReference type="ChEBI" id="CHEBI:15378"/>
        <dbReference type="ChEBI" id="CHEBI:15379"/>
        <dbReference type="ChEBI" id="CHEBI:31181"/>
        <dbReference type="ChEBI" id="CHEBI:57783"/>
        <dbReference type="ChEBI" id="CHEBI:58349"/>
        <dbReference type="ChEBI" id="CHEBI:75291"/>
        <dbReference type="EC" id="1.14.13.180"/>
    </reaction>
</comment>
<comment type="cofactor">
    <cofactor evidence="1">
        <name>FAD</name>
        <dbReference type="ChEBI" id="CHEBI:57692"/>
    </cofactor>
</comment>
<comment type="pathway">
    <text>Antibiotic biosynthesis; daunorubicin biosynthesis.</text>
</comment>
<comment type="pathway">
    <text>Antibiotic biosynthesis; carminomycin biosynthesis.</text>
</comment>
<comment type="pathway">
    <text>Antibiotic biosynthesis; rhodomycin biosynthesis.</text>
</comment>
<comment type="subunit">
    <text evidence="1">Monomer.</text>
</comment>
<comment type="similarity">
    <text evidence="4">Belongs to the PheA/TfdB FAD monooxygenase family.</text>
</comment>